<proteinExistence type="inferred from homology"/>
<organism>
    <name type="scientific">Human coronavirus HKU1 (isolate N1)</name>
    <name type="common">HCoV-HKU1</name>
    <dbReference type="NCBI Taxonomy" id="443239"/>
    <lineage>
        <taxon>Viruses</taxon>
        <taxon>Riboviria</taxon>
        <taxon>Orthornavirae</taxon>
        <taxon>Pisuviricota</taxon>
        <taxon>Pisoniviricetes</taxon>
        <taxon>Nidovirales</taxon>
        <taxon>Cornidovirineae</taxon>
        <taxon>Coronaviridae</taxon>
        <taxon>Orthocoronavirinae</taxon>
        <taxon>Betacoronavirus</taxon>
        <taxon>Embecovirus</taxon>
        <taxon>Human coronavirus HKU1</taxon>
    </lineage>
</organism>
<gene>
    <name type="ORF">4</name>
</gene>
<comment type="miscellaneous">
    <text>Isolate N1 belongs to genotype A.</text>
</comment>
<comment type="similarity">
    <text evidence="1">Belongs to the coronaviruses ns12.7 protein family.</text>
</comment>
<name>NS12_CVHN1</name>
<evidence type="ECO:0000305" key="1"/>
<sequence length="109" mass="12490">MDVWRPSYTHSLVIREFGVTNLEDLCLKYNYCQPIVGYCIVPLNVWCRKFGKFASHFTLRSHDISHSNNFGVVTSFTTYGNTVSEAVSRLVESASEFIVWRAEALNKYG</sequence>
<dbReference type="EMBL" id="AY597011">
    <property type="protein sequence ID" value="AAT98582.1"/>
    <property type="molecule type" value="Genomic_RNA"/>
</dbReference>
<dbReference type="DNASU" id="3200427"/>
<dbReference type="KEGG" id="vg:3200427"/>
<dbReference type="Proteomes" id="UP000008170">
    <property type="component" value="Segment"/>
</dbReference>
<dbReference type="InterPro" id="IPR006841">
    <property type="entry name" value="Corona_NS2"/>
</dbReference>
<dbReference type="Pfam" id="PF04753">
    <property type="entry name" value="Corona_NS12-7"/>
    <property type="match status" value="1"/>
</dbReference>
<feature type="chain" id="PRO_0000297770" description="Non-structural protein 4">
    <location>
        <begin position="1"/>
        <end position="109"/>
    </location>
</feature>
<accession>Q5MQC9</accession>
<protein>
    <recommendedName>
        <fullName>Non-structural protein 4</fullName>
        <shortName>ns4</shortName>
    </recommendedName>
    <alternativeName>
        <fullName>Accessory protein 4</fullName>
    </alternativeName>
    <alternativeName>
        <fullName>Non-structural protein of 12.5 kDa</fullName>
        <shortName>ns12.5</shortName>
    </alternativeName>
    <alternativeName>
        <fullName>Orf4 protein</fullName>
    </alternativeName>
</protein>
<reference key="1">
    <citation type="journal article" date="2005" name="J. Virol.">
        <title>Characterization and complete genome sequence of a novel coronavirus, coronavirus HKU1, from patients with pneumonia.</title>
        <authorList>
            <person name="Woo P.C.Y."/>
            <person name="Lau S.K.P."/>
            <person name="Chu C.-M."/>
            <person name="Chan K.-H."/>
            <person name="Tsoi H.-W."/>
            <person name="Huang Y."/>
            <person name="Wong B.H.L."/>
            <person name="Poon R.W.S."/>
            <person name="Cai J.J."/>
            <person name="Luk W.-K."/>
            <person name="Poon L.L.M."/>
            <person name="Wong S.S.Y."/>
            <person name="Guan Y."/>
            <person name="Peiris J.S.M."/>
            <person name="Yuen K.-Y."/>
        </authorList>
    </citation>
    <scope>NUCLEOTIDE SEQUENCE [GENOMIC RNA]</scope>
</reference>
<organismHost>
    <name type="scientific">Homo sapiens</name>
    <name type="common">Human</name>
    <dbReference type="NCBI Taxonomy" id="9606"/>
</organismHost>